<protein>
    <recommendedName>
        <fullName evidence="1">UDP-N-acetylglucosamine 1-carboxyvinyltransferase</fullName>
        <ecNumber evidence="1">2.5.1.7</ecNumber>
    </recommendedName>
    <alternativeName>
        <fullName evidence="1">Enoylpyruvate transferase</fullName>
    </alternativeName>
    <alternativeName>
        <fullName evidence="1">UDP-N-acetylglucosamine enolpyruvyl transferase</fullName>
        <shortName evidence="1">EPT</shortName>
    </alternativeName>
</protein>
<sequence length="424" mass="45187">MDKFRVYGQSRLSGSVNISGAKNAALPILFAAILATEPVKLTNVPELKDIETTLKILRQLGVVVDRDATGAVLLDASNINHFTAPYELVKTMRASIWALAPLVARFHQGQVSLPGGCSIGARPVDLHISGLEKLGADIVLEEGYVKAQVSDRLVGTRIVIEKVSVGATLSIMMAATLAKGTTVIENAAREPEIVDTADFLNKMGAKITGAGSAHITIEGVERLTGCEHSVVPDRIETGTFLIAAAISGGCVVCQNTKADTLDAVIDKLREAGAQVDVTENSITLDMLGNRPKAVNIRTAPHPGFPTDMQAQFTLLNMVAEGTSIITETIFENRFMHIPELIRMGGKAEIEGNTAVCHGVEQLSGTEVIATDLRASISLVLAGCIATGETIVDRIYHIDRGYEHIEDKLRGLGAKIERFSGSDEA</sequence>
<reference key="1">
    <citation type="journal article" date="1995" name="Science">
        <title>Whole-genome random sequencing and assembly of Haemophilus influenzae Rd.</title>
        <authorList>
            <person name="Fleischmann R.D."/>
            <person name="Adams M.D."/>
            <person name="White O."/>
            <person name="Clayton R.A."/>
            <person name="Kirkness E.F."/>
            <person name="Kerlavage A.R."/>
            <person name="Bult C.J."/>
            <person name="Tomb J.-F."/>
            <person name="Dougherty B.A."/>
            <person name="Merrick J.M."/>
            <person name="McKenney K."/>
            <person name="Sutton G.G."/>
            <person name="FitzHugh W."/>
            <person name="Fields C.A."/>
            <person name="Gocayne J.D."/>
            <person name="Scott J.D."/>
            <person name="Shirley R."/>
            <person name="Liu L.-I."/>
            <person name="Glodek A."/>
            <person name="Kelley J.M."/>
            <person name="Weidman J.F."/>
            <person name="Phillips C.A."/>
            <person name="Spriggs T."/>
            <person name="Hedblom E."/>
            <person name="Cotton M.D."/>
            <person name="Utterback T.R."/>
            <person name="Hanna M.C."/>
            <person name="Nguyen D.T."/>
            <person name="Saudek D.M."/>
            <person name="Brandon R.C."/>
            <person name="Fine L.D."/>
            <person name="Fritchman J.L."/>
            <person name="Fuhrmann J.L."/>
            <person name="Geoghagen N.S.M."/>
            <person name="Gnehm C.L."/>
            <person name="McDonald L.A."/>
            <person name="Small K.V."/>
            <person name="Fraser C.M."/>
            <person name="Smith H.O."/>
            <person name="Venter J.C."/>
        </authorList>
    </citation>
    <scope>NUCLEOTIDE SEQUENCE [LARGE SCALE GENOMIC DNA]</scope>
    <source>
        <strain>ATCC 51907 / DSM 11121 / KW20 / Rd</strain>
    </source>
</reference>
<reference evidence="4" key="2">
    <citation type="journal article" date="2012" name="J. Biol. Chem.">
        <title>Functional consequence of covalent reaction of phosphoenolpyruvate with UDP-N-acetylglucosamine 1-carboxyvinyltransferase (MurA).</title>
        <authorList>
            <person name="Zhu J.Y."/>
            <person name="Yang Y."/>
            <person name="Han H."/>
            <person name="Betzi S."/>
            <person name="Olesen S.H."/>
            <person name="Marsilio F."/>
            <person name="Schoenbrunn E."/>
        </authorList>
    </citation>
    <scope>X-RAY CRYSTALLOGRAPHY (2.20 ANGSTROMS) IN COMPLEX WITH SUBSTRATE ANALOG</scope>
    <scope>ACTIVE SITE</scope>
    <scope>FORMATION OF COVALENT REACTION INTERMEDIATE</scope>
</reference>
<proteinExistence type="evidence at protein level"/>
<evidence type="ECO:0000255" key="1">
    <source>
        <dbReference type="HAMAP-Rule" id="MF_00111"/>
    </source>
</evidence>
<evidence type="ECO:0000269" key="2">
    <source>
    </source>
</evidence>
<evidence type="ECO:0000305" key="3">
    <source>
    </source>
</evidence>
<evidence type="ECO:0007744" key="4">
    <source>
        <dbReference type="PDB" id="3SWE"/>
    </source>
</evidence>
<evidence type="ECO:0007829" key="5">
    <source>
        <dbReference type="PDB" id="2RL1"/>
    </source>
</evidence>
<evidence type="ECO:0007829" key="6">
    <source>
        <dbReference type="PDB" id="2RL2"/>
    </source>
</evidence>
<dbReference type="EC" id="2.5.1.7" evidence="1"/>
<dbReference type="EMBL" id="L42023">
    <property type="protein sequence ID" value="AAC22737.1"/>
    <property type="molecule type" value="Genomic_DNA"/>
</dbReference>
<dbReference type="PIR" id="A64182">
    <property type="entry name" value="A64182"/>
</dbReference>
<dbReference type="RefSeq" id="NP_439238.1">
    <property type="nucleotide sequence ID" value="NC_000907.1"/>
</dbReference>
<dbReference type="PDB" id="2RL1">
    <property type="method" value="X-ray"/>
    <property type="resolution" value="2.20 A"/>
    <property type="chains" value="A=1-424"/>
</dbReference>
<dbReference type="PDB" id="2RL2">
    <property type="method" value="X-ray"/>
    <property type="resolution" value="2.30 A"/>
    <property type="chains" value="A=1-424"/>
</dbReference>
<dbReference type="PDB" id="3SWE">
    <property type="method" value="X-ray"/>
    <property type="resolution" value="2.20 A"/>
    <property type="chains" value="A=1-424"/>
</dbReference>
<dbReference type="PDBsum" id="2RL1"/>
<dbReference type="PDBsum" id="2RL2"/>
<dbReference type="PDBsum" id="3SWE"/>
<dbReference type="SMR" id="P45025"/>
<dbReference type="STRING" id="71421.HI_1081"/>
<dbReference type="EnsemblBacteria" id="AAC22737">
    <property type="protein sequence ID" value="AAC22737"/>
    <property type="gene ID" value="HI_1081"/>
</dbReference>
<dbReference type="KEGG" id="hin:HI_1081"/>
<dbReference type="PATRIC" id="fig|71421.8.peg.1126"/>
<dbReference type="eggNOG" id="COG0766">
    <property type="taxonomic scope" value="Bacteria"/>
</dbReference>
<dbReference type="HOGENOM" id="CLU_027387_0_0_6"/>
<dbReference type="OrthoDB" id="9803760at2"/>
<dbReference type="PhylomeDB" id="P45025"/>
<dbReference type="BioCyc" id="HINF71421:G1GJ1-1116-MONOMER"/>
<dbReference type="BRENDA" id="2.5.1.7">
    <property type="organism ID" value="2529"/>
</dbReference>
<dbReference type="SABIO-RK" id="P45025"/>
<dbReference type="UniPathway" id="UPA00219"/>
<dbReference type="EvolutionaryTrace" id="P45025"/>
<dbReference type="Proteomes" id="UP000000579">
    <property type="component" value="Chromosome"/>
</dbReference>
<dbReference type="GO" id="GO:0005737">
    <property type="term" value="C:cytoplasm"/>
    <property type="evidence" value="ECO:0007669"/>
    <property type="project" value="UniProtKB-SubCell"/>
</dbReference>
<dbReference type="GO" id="GO:0008760">
    <property type="term" value="F:UDP-N-acetylglucosamine 1-carboxyvinyltransferase activity"/>
    <property type="evidence" value="ECO:0000318"/>
    <property type="project" value="GO_Central"/>
</dbReference>
<dbReference type="GO" id="GO:0051301">
    <property type="term" value="P:cell division"/>
    <property type="evidence" value="ECO:0007669"/>
    <property type="project" value="UniProtKB-KW"/>
</dbReference>
<dbReference type="GO" id="GO:0071555">
    <property type="term" value="P:cell wall organization"/>
    <property type="evidence" value="ECO:0007669"/>
    <property type="project" value="UniProtKB-KW"/>
</dbReference>
<dbReference type="GO" id="GO:0009252">
    <property type="term" value="P:peptidoglycan biosynthetic process"/>
    <property type="evidence" value="ECO:0000318"/>
    <property type="project" value="GO_Central"/>
</dbReference>
<dbReference type="GO" id="GO:0008360">
    <property type="term" value="P:regulation of cell shape"/>
    <property type="evidence" value="ECO:0007669"/>
    <property type="project" value="UniProtKB-KW"/>
</dbReference>
<dbReference type="GO" id="GO:0019277">
    <property type="term" value="P:UDP-N-acetylgalactosamine biosynthetic process"/>
    <property type="evidence" value="ECO:0007669"/>
    <property type="project" value="InterPro"/>
</dbReference>
<dbReference type="CDD" id="cd01555">
    <property type="entry name" value="UdpNAET"/>
    <property type="match status" value="1"/>
</dbReference>
<dbReference type="FunFam" id="3.65.10.10:FF:000002">
    <property type="entry name" value="UDP-N-acetylglucosamine 1-carboxyvinyltransferase"/>
    <property type="match status" value="1"/>
</dbReference>
<dbReference type="Gene3D" id="3.65.10.10">
    <property type="entry name" value="Enolpyruvate transferase domain"/>
    <property type="match status" value="2"/>
</dbReference>
<dbReference type="HAMAP" id="MF_00111">
    <property type="entry name" value="MurA"/>
    <property type="match status" value="1"/>
</dbReference>
<dbReference type="InterPro" id="IPR001986">
    <property type="entry name" value="Enolpyruvate_Tfrase_dom"/>
</dbReference>
<dbReference type="InterPro" id="IPR036968">
    <property type="entry name" value="Enolpyruvate_Tfrase_sf"/>
</dbReference>
<dbReference type="InterPro" id="IPR050068">
    <property type="entry name" value="MurA_subfamily"/>
</dbReference>
<dbReference type="InterPro" id="IPR013792">
    <property type="entry name" value="RNA3'P_cycl/enolpyr_Trfase_a/b"/>
</dbReference>
<dbReference type="InterPro" id="IPR005750">
    <property type="entry name" value="UDP_GlcNAc_COvinyl_MurA"/>
</dbReference>
<dbReference type="NCBIfam" id="TIGR01072">
    <property type="entry name" value="murA"/>
    <property type="match status" value="1"/>
</dbReference>
<dbReference type="NCBIfam" id="NF006873">
    <property type="entry name" value="PRK09369.1"/>
    <property type="match status" value="1"/>
</dbReference>
<dbReference type="PANTHER" id="PTHR43783">
    <property type="entry name" value="UDP-N-ACETYLGLUCOSAMINE 1-CARBOXYVINYLTRANSFERASE"/>
    <property type="match status" value="1"/>
</dbReference>
<dbReference type="PANTHER" id="PTHR43783:SF1">
    <property type="entry name" value="UDP-N-ACETYLGLUCOSAMINE 1-CARBOXYVINYLTRANSFERASE"/>
    <property type="match status" value="1"/>
</dbReference>
<dbReference type="Pfam" id="PF00275">
    <property type="entry name" value="EPSP_synthase"/>
    <property type="match status" value="1"/>
</dbReference>
<dbReference type="SUPFAM" id="SSF55205">
    <property type="entry name" value="EPT/RTPC-like"/>
    <property type="match status" value="1"/>
</dbReference>
<feature type="chain" id="PRO_0000178876" description="UDP-N-acetylglucosamine 1-carboxyvinyltransferase">
    <location>
        <begin position="1"/>
        <end position="424"/>
    </location>
</feature>
<feature type="active site" description="Proton donor" evidence="1 3">
    <location>
        <position position="117"/>
    </location>
</feature>
<feature type="binding site" evidence="3 4">
    <location>
        <begin position="22"/>
        <end position="23"/>
    </location>
    <ligand>
        <name>phosphoenolpyruvate</name>
        <dbReference type="ChEBI" id="CHEBI:58702"/>
    </ligand>
</feature>
<feature type="binding site" evidence="1">
    <location>
        <position position="93"/>
    </location>
    <ligand>
        <name>UDP-N-acetyl-alpha-D-glucosamine</name>
        <dbReference type="ChEBI" id="CHEBI:57705"/>
    </ligand>
</feature>
<feature type="binding site" evidence="2 4">
    <location>
        <begin position="122"/>
        <end position="126"/>
    </location>
    <ligand>
        <name>UDP-N-acetyl-alpha-D-glucosamine</name>
        <dbReference type="ChEBI" id="CHEBI:57705"/>
    </ligand>
</feature>
<feature type="binding site" evidence="2 4">
    <location>
        <begin position="164"/>
        <end position="166"/>
    </location>
    <ligand>
        <name>UDP-N-acetyl-alpha-D-glucosamine</name>
        <dbReference type="ChEBI" id="CHEBI:57705"/>
    </ligand>
</feature>
<feature type="binding site" evidence="2 4">
    <location>
        <position position="307"/>
    </location>
    <ligand>
        <name>UDP-N-acetyl-alpha-D-glucosamine</name>
        <dbReference type="ChEBI" id="CHEBI:57705"/>
    </ligand>
</feature>
<feature type="binding site" evidence="2 4">
    <location>
        <position position="329"/>
    </location>
    <ligand>
        <name>UDP-N-acetyl-alpha-D-glucosamine</name>
        <dbReference type="ChEBI" id="CHEBI:57705"/>
    </ligand>
</feature>
<feature type="modified residue" description="2-(S-cysteinyl)pyruvic acid O-phosphothioketal" evidence="1 3">
    <location>
        <position position="117"/>
    </location>
</feature>
<feature type="strand" evidence="5">
    <location>
        <begin position="2"/>
        <end position="8"/>
    </location>
</feature>
<feature type="strand" evidence="5">
    <location>
        <begin position="14"/>
        <end position="17"/>
    </location>
</feature>
<feature type="helix" evidence="5">
    <location>
        <begin position="22"/>
        <end position="31"/>
    </location>
</feature>
<feature type="helix" evidence="5">
    <location>
        <begin position="32"/>
        <end position="34"/>
    </location>
</feature>
<feature type="strand" evidence="5">
    <location>
        <begin position="35"/>
        <end position="37"/>
    </location>
</feature>
<feature type="strand" evidence="5">
    <location>
        <begin position="39"/>
        <end position="43"/>
    </location>
</feature>
<feature type="helix" evidence="5">
    <location>
        <begin position="48"/>
        <end position="58"/>
    </location>
</feature>
<feature type="turn" evidence="5">
    <location>
        <begin position="59"/>
        <end position="61"/>
    </location>
</feature>
<feature type="strand" evidence="5">
    <location>
        <begin position="63"/>
        <end position="66"/>
    </location>
</feature>
<feature type="strand" evidence="5">
    <location>
        <begin position="72"/>
        <end position="75"/>
    </location>
</feature>
<feature type="helix" evidence="5">
    <location>
        <begin position="86"/>
        <end position="89"/>
    </location>
</feature>
<feature type="helix" evidence="5">
    <location>
        <begin position="93"/>
        <end position="98"/>
    </location>
</feature>
<feature type="helix" evidence="5">
    <location>
        <begin position="99"/>
        <end position="106"/>
    </location>
</feature>
<feature type="strand" evidence="5">
    <location>
        <begin position="107"/>
        <end position="112"/>
    </location>
</feature>
<feature type="strand" evidence="6">
    <location>
        <begin position="118"/>
        <end position="120"/>
    </location>
</feature>
<feature type="helix" evidence="5">
    <location>
        <begin position="125"/>
        <end position="133"/>
    </location>
</feature>
<feature type="strand" evidence="5">
    <location>
        <begin position="137"/>
        <end position="141"/>
    </location>
</feature>
<feature type="strand" evidence="5">
    <location>
        <begin position="144"/>
        <end position="148"/>
    </location>
</feature>
<feature type="strand" evidence="5">
    <location>
        <begin position="150"/>
        <end position="152"/>
    </location>
</feature>
<feature type="strand" evidence="5">
    <location>
        <begin position="157"/>
        <end position="159"/>
    </location>
</feature>
<feature type="helix" evidence="5">
    <location>
        <begin position="165"/>
        <end position="175"/>
    </location>
</feature>
<feature type="strand" evidence="5">
    <location>
        <begin position="178"/>
        <end position="185"/>
    </location>
</feature>
<feature type="helix" evidence="5">
    <location>
        <begin position="191"/>
        <end position="201"/>
    </location>
</feature>
<feature type="turn" evidence="5">
    <location>
        <begin position="202"/>
        <end position="204"/>
    </location>
</feature>
<feature type="strand" evidence="5">
    <location>
        <begin position="212"/>
        <end position="218"/>
    </location>
</feature>
<feature type="strand" evidence="5">
    <location>
        <begin position="226"/>
        <end position="229"/>
    </location>
</feature>
<feature type="helix" evidence="5">
    <location>
        <begin position="234"/>
        <end position="245"/>
    </location>
</feature>
<feature type="turn" evidence="5">
    <location>
        <begin position="246"/>
        <end position="248"/>
    </location>
</feature>
<feature type="strand" evidence="5">
    <location>
        <begin position="250"/>
        <end position="255"/>
    </location>
</feature>
<feature type="helix" evidence="5">
    <location>
        <begin position="258"/>
        <end position="260"/>
    </location>
</feature>
<feature type="helix" evidence="5">
    <location>
        <begin position="262"/>
        <end position="270"/>
    </location>
</feature>
<feature type="strand" evidence="5">
    <location>
        <begin position="274"/>
        <end position="277"/>
    </location>
</feature>
<feature type="strand" evidence="5">
    <location>
        <begin position="279"/>
        <end position="285"/>
    </location>
</feature>
<feature type="strand" evidence="5">
    <location>
        <begin position="296"/>
        <end position="298"/>
    </location>
</feature>
<feature type="helix" evidence="5">
    <location>
        <begin position="306"/>
        <end position="308"/>
    </location>
</feature>
<feature type="helix" evidence="5">
    <location>
        <begin position="309"/>
        <end position="317"/>
    </location>
</feature>
<feature type="strand" evidence="5">
    <location>
        <begin position="319"/>
        <end position="326"/>
    </location>
</feature>
<feature type="helix" evidence="5">
    <location>
        <begin position="336"/>
        <end position="341"/>
    </location>
</feature>
<feature type="turn" evidence="5">
    <location>
        <begin position="342"/>
        <end position="344"/>
    </location>
</feature>
<feature type="strand" evidence="5">
    <location>
        <begin position="346"/>
        <end position="350"/>
    </location>
</feature>
<feature type="strand" evidence="5">
    <location>
        <begin position="353"/>
        <end position="357"/>
    </location>
</feature>
<feature type="strand" evidence="5">
    <location>
        <begin position="366"/>
        <end position="368"/>
    </location>
</feature>
<feature type="turn" evidence="5">
    <location>
        <begin position="372"/>
        <end position="375"/>
    </location>
</feature>
<feature type="helix" evidence="5">
    <location>
        <begin position="376"/>
        <end position="384"/>
    </location>
</feature>
<feature type="strand" evidence="5">
    <location>
        <begin position="385"/>
        <end position="392"/>
    </location>
</feature>
<feature type="helix" evidence="5">
    <location>
        <begin position="395"/>
        <end position="400"/>
    </location>
</feature>
<feature type="helix" evidence="5">
    <location>
        <begin position="404"/>
        <end position="409"/>
    </location>
</feature>
<feature type="turn" evidence="5">
    <location>
        <begin position="410"/>
        <end position="412"/>
    </location>
</feature>
<feature type="strand" evidence="5">
    <location>
        <begin position="415"/>
        <end position="419"/>
    </location>
</feature>
<name>MURA_HAEIN</name>
<gene>
    <name evidence="1" type="primary">murA</name>
    <name type="synonym">murZ</name>
    <name type="ordered locus">HI_1081</name>
</gene>
<comment type="function">
    <text evidence="1">Cell wall formation. Adds enolpyruvyl to UDP-N-acetylglucosamine.</text>
</comment>
<comment type="catalytic activity">
    <reaction evidence="1">
        <text>phosphoenolpyruvate + UDP-N-acetyl-alpha-D-glucosamine = UDP-N-acetyl-3-O-(1-carboxyvinyl)-alpha-D-glucosamine + phosphate</text>
        <dbReference type="Rhea" id="RHEA:18681"/>
        <dbReference type="ChEBI" id="CHEBI:43474"/>
        <dbReference type="ChEBI" id="CHEBI:57705"/>
        <dbReference type="ChEBI" id="CHEBI:58702"/>
        <dbReference type="ChEBI" id="CHEBI:68483"/>
        <dbReference type="EC" id="2.5.1.7"/>
    </reaction>
</comment>
<comment type="pathway">
    <text evidence="1">Cell wall biogenesis; peptidoglycan biosynthesis.</text>
</comment>
<comment type="subcellular location">
    <subcellularLocation>
        <location evidence="1">Cytoplasm</location>
    </subcellularLocation>
</comment>
<comment type="similarity">
    <text evidence="1">Belongs to the EPSP synthase family. MurA subfamily.</text>
</comment>
<organism>
    <name type="scientific">Haemophilus influenzae (strain ATCC 51907 / DSM 11121 / KW20 / Rd)</name>
    <dbReference type="NCBI Taxonomy" id="71421"/>
    <lineage>
        <taxon>Bacteria</taxon>
        <taxon>Pseudomonadati</taxon>
        <taxon>Pseudomonadota</taxon>
        <taxon>Gammaproteobacteria</taxon>
        <taxon>Pasteurellales</taxon>
        <taxon>Pasteurellaceae</taxon>
        <taxon>Haemophilus</taxon>
    </lineage>
</organism>
<keyword id="KW-0002">3D-structure</keyword>
<keyword id="KW-0131">Cell cycle</keyword>
<keyword id="KW-0132">Cell division</keyword>
<keyword id="KW-0133">Cell shape</keyword>
<keyword id="KW-0961">Cell wall biogenesis/degradation</keyword>
<keyword id="KW-0963">Cytoplasm</keyword>
<keyword id="KW-0573">Peptidoglycan synthesis</keyword>
<keyword id="KW-0670">Pyruvate</keyword>
<keyword id="KW-1185">Reference proteome</keyword>
<keyword id="KW-0808">Transferase</keyword>
<accession>P45025</accession>